<dbReference type="EMBL" id="AE001273">
    <property type="protein sequence ID" value="AAC67795.2"/>
    <property type="molecule type" value="Genomic_DNA"/>
</dbReference>
<dbReference type="PIR" id="E71543">
    <property type="entry name" value="E71543"/>
</dbReference>
<dbReference type="RefSeq" id="NP_219707.1">
    <property type="nucleotide sequence ID" value="NC_000117.1"/>
</dbReference>
<dbReference type="RefSeq" id="WP_010725120.1">
    <property type="nucleotide sequence ID" value="NC_000117.1"/>
</dbReference>
<dbReference type="SMR" id="O84206"/>
<dbReference type="STRING" id="272561.CT_203"/>
<dbReference type="EnsemblBacteria" id="AAC67795">
    <property type="protein sequence ID" value="AAC67795"/>
    <property type="gene ID" value="CT_203"/>
</dbReference>
<dbReference type="GeneID" id="884926"/>
<dbReference type="KEGG" id="ctr:CT_203"/>
<dbReference type="PATRIC" id="fig|272561.5.peg.218"/>
<dbReference type="HOGENOM" id="CLU_075496_0_0_0"/>
<dbReference type="InParanoid" id="O84206"/>
<dbReference type="OrthoDB" id="18359at2"/>
<dbReference type="Proteomes" id="UP000000431">
    <property type="component" value="Chromosome"/>
</dbReference>
<dbReference type="InterPro" id="IPR010602">
    <property type="entry name" value="DUF1186"/>
</dbReference>
<dbReference type="Pfam" id="PF06685">
    <property type="entry name" value="DUF1186"/>
    <property type="match status" value="1"/>
</dbReference>
<proteinExistence type="inferred from homology"/>
<protein>
    <recommendedName>
        <fullName>Uncharacterized protein CT_203</fullName>
    </recommendedName>
</protein>
<keyword id="KW-1185">Reference proteome</keyword>
<accession>O84206</accession>
<feature type="chain" id="PRO_0000218371" description="Uncharacterized protein CT_203">
    <location>
        <begin position="1"/>
        <end position="251"/>
    </location>
</feature>
<comment type="similarity">
    <text evidence="1">Belongs to the chlamydial CPn_0206/CT_203/TC_0475 family.</text>
</comment>
<organism>
    <name type="scientific">Chlamydia trachomatis serovar D (strain ATCC VR-885 / DSM 19411 / UW-3/Cx)</name>
    <dbReference type="NCBI Taxonomy" id="272561"/>
    <lineage>
        <taxon>Bacteria</taxon>
        <taxon>Pseudomonadati</taxon>
        <taxon>Chlamydiota</taxon>
        <taxon>Chlamydiia</taxon>
        <taxon>Chlamydiales</taxon>
        <taxon>Chlamydiaceae</taxon>
        <taxon>Chlamydia/Chlamydophila group</taxon>
        <taxon>Chlamydia</taxon>
    </lineage>
</organism>
<sequence length="251" mass="28462">MTMEISHILEDLVYDNGVLPREAIEAAIVKHHQITPYLLKILEEAIDHVSDIIDDDCYQGHLYAMYLLAQFRETRALPLIIKLFSFEQDIPHAIAGDVLTEDLSRILASVCDDVALIQELIETPHVNPYVQAAAISSLVALVGVHKLSRETAIRYFGELLNYRLEKKPSFAWDSLVASICALYPKELFYPISKAFSAGLIDTSFISMEDVETIIHEESIDSCLKEVLSSTDLINDTLEEMEKWLERFPFES</sequence>
<reference key="1">
    <citation type="journal article" date="1998" name="Science">
        <title>Genome sequence of an obligate intracellular pathogen of humans: Chlamydia trachomatis.</title>
        <authorList>
            <person name="Stephens R.S."/>
            <person name="Kalman S."/>
            <person name="Lammel C.J."/>
            <person name="Fan J."/>
            <person name="Marathe R."/>
            <person name="Aravind L."/>
            <person name="Mitchell W.P."/>
            <person name="Olinger L."/>
            <person name="Tatusov R.L."/>
            <person name="Zhao Q."/>
            <person name="Koonin E.V."/>
            <person name="Davis R.W."/>
        </authorList>
    </citation>
    <scope>NUCLEOTIDE SEQUENCE [LARGE SCALE GENOMIC DNA]</scope>
    <source>
        <strain>ATCC VR-885 / DSM 19411 / UW-3/Cx</strain>
    </source>
</reference>
<name>Y203_CHLTR</name>
<gene>
    <name type="ordered locus">CT_203</name>
</gene>
<evidence type="ECO:0000305" key="1"/>